<dbReference type="EMBL" id="AC160833">
    <property type="protein sequence ID" value="AAY96799.1"/>
    <property type="molecule type" value="Genomic_DNA"/>
</dbReference>
<dbReference type="EMBL" id="CR760467">
    <property type="protein sequence ID" value="CAJ82991.1"/>
    <property type="molecule type" value="mRNA"/>
</dbReference>
<dbReference type="EMBL" id="BC087608">
    <property type="protein sequence ID" value="AAH87608.1"/>
    <property type="molecule type" value="mRNA"/>
</dbReference>
<dbReference type="RefSeq" id="NP_001011194.1">
    <property type="nucleotide sequence ID" value="NM_001011194.1"/>
</dbReference>
<dbReference type="BMRB" id="Q5PPM5"/>
<dbReference type="SMR" id="Q5PPM5"/>
<dbReference type="FunCoup" id="Q5PPM5">
    <property type="interactions" value="1724"/>
</dbReference>
<dbReference type="STRING" id="8364.ENSXETP00000016024"/>
<dbReference type="PaxDb" id="8364-ENSXETP00000062036"/>
<dbReference type="GeneID" id="496617"/>
<dbReference type="KEGG" id="xtr:496617"/>
<dbReference type="AGR" id="Xenbase:XB-GENE-487995"/>
<dbReference type="CTD" id="3280"/>
<dbReference type="Xenbase" id="XB-GENE-487995">
    <property type="gene designation" value="hes1"/>
</dbReference>
<dbReference type="eggNOG" id="KOG4304">
    <property type="taxonomic scope" value="Eukaryota"/>
</dbReference>
<dbReference type="HOGENOM" id="CLU_068550_1_0_1"/>
<dbReference type="InParanoid" id="Q5PPM5"/>
<dbReference type="OMA" id="DPMEKSS"/>
<dbReference type="OrthoDB" id="6085656at2759"/>
<dbReference type="PhylomeDB" id="Q5PPM5"/>
<dbReference type="Proteomes" id="UP000008143">
    <property type="component" value="Chromosome 5"/>
</dbReference>
<dbReference type="Bgee" id="ENSXETG00000016852">
    <property type="expression patterns" value="Expressed in neurula embryo and 13 other cell types or tissues"/>
</dbReference>
<dbReference type="GO" id="GO:0005634">
    <property type="term" value="C:nucleus"/>
    <property type="evidence" value="ECO:0000250"/>
    <property type="project" value="UniProtKB"/>
</dbReference>
<dbReference type="GO" id="GO:0043425">
    <property type="term" value="F:bHLH transcription factor binding"/>
    <property type="evidence" value="ECO:0000250"/>
    <property type="project" value="UniProtKB"/>
</dbReference>
<dbReference type="GO" id="GO:0003677">
    <property type="term" value="F:DNA binding"/>
    <property type="evidence" value="ECO:0007669"/>
    <property type="project" value="UniProtKB-KW"/>
</dbReference>
<dbReference type="GO" id="GO:0046982">
    <property type="term" value="F:protein heterodimerization activity"/>
    <property type="evidence" value="ECO:0000250"/>
    <property type="project" value="UniProtKB"/>
</dbReference>
<dbReference type="GO" id="GO:0045892">
    <property type="term" value="P:negative regulation of DNA-templated transcription"/>
    <property type="evidence" value="ECO:0000250"/>
    <property type="project" value="UniProtKB"/>
</dbReference>
<dbReference type="GO" id="GO:0048635">
    <property type="term" value="P:negative regulation of muscle organ development"/>
    <property type="evidence" value="ECO:0000250"/>
    <property type="project" value="UniProtKB"/>
</dbReference>
<dbReference type="GO" id="GO:0000122">
    <property type="term" value="P:negative regulation of transcription by RNA polymerase II"/>
    <property type="evidence" value="ECO:0000250"/>
    <property type="project" value="UniProtKB"/>
</dbReference>
<dbReference type="GO" id="GO:0007219">
    <property type="term" value="P:Notch signaling pathway"/>
    <property type="evidence" value="ECO:0000250"/>
    <property type="project" value="UniProtKB"/>
</dbReference>
<dbReference type="CDD" id="cd11459">
    <property type="entry name" value="bHLH-O_HES1_4"/>
    <property type="match status" value="1"/>
</dbReference>
<dbReference type="FunFam" id="4.10.280.10:FF:000009">
    <property type="entry name" value="Transcription factor HES-1"/>
    <property type="match status" value="1"/>
</dbReference>
<dbReference type="Gene3D" id="6.10.250.980">
    <property type="match status" value="1"/>
</dbReference>
<dbReference type="Gene3D" id="4.10.280.10">
    <property type="entry name" value="Helix-loop-helix DNA-binding domain"/>
    <property type="match status" value="1"/>
</dbReference>
<dbReference type="InterPro" id="IPR011598">
    <property type="entry name" value="bHLH_dom"/>
</dbReference>
<dbReference type="InterPro" id="IPR050370">
    <property type="entry name" value="HES_HEY"/>
</dbReference>
<dbReference type="InterPro" id="IPR036638">
    <property type="entry name" value="HLH_DNA-bd_sf"/>
</dbReference>
<dbReference type="InterPro" id="IPR003650">
    <property type="entry name" value="Orange_dom"/>
</dbReference>
<dbReference type="PANTHER" id="PTHR10985">
    <property type="entry name" value="BASIC HELIX-LOOP-HELIX TRANSCRIPTION FACTOR, HES-RELATED"/>
    <property type="match status" value="1"/>
</dbReference>
<dbReference type="Pfam" id="PF07527">
    <property type="entry name" value="Hairy_orange"/>
    <property type="match status" value="1"/>
</dbReference>
<dbReference type="Pfam" id="PF00010">
    <property type="entry name" value="HLH"/>
    <property type="match status" value="1"/>
</dbReference>
<dbReference type="SMART" id="SM00353">
    <property type="entry name" value="HLH"/>
    <property type="match status" value="1"/>
</dbReference>
<dbReference type="SMART" id="SM00511">
    <property type="entry name" value="ORANGE"/>
    <property type="match status" value="1"/>
</dbReference>
<dbReference type="SUPFAM" id="SSF47459">
    <property type="entry name" value="HLH, helix-loop-helix DNA-binding domain"/>
    <property type="match status" value="1"/>
</dbReference>
<dbReference type="SUPFAM" id="SSF158457">
    <property type="entry name" value="Orange domain-like"/>
    <property type="match status" value="1"/>
</dbReference>
<dbReference type="PROSITE" id="PS50888">
    <property type="entry name" value="BHLH"/>
    <property type="match status" value="1"/>
</dbReference>
<dbReference type="PROSITE" id="PS51054">
    <property type="entry name" value="ORANGE"/>
    <property type="match status" value="1"/>
</dbReference>
<sequence length="267" mass="28736">MPADLMEKNSSSPVAATPASMSNTPDKPKTASEHRKSSKPIMEKRRRARINESLGQLKTLILDALKKDSSRHSKLEKADILEMTVKHLRNLQRVQMTAALSTDPSVLGKYRAGFSECMNEVTRFLSTCEGVNTDVRTRLLGHLANCMNQINAMNYPTQPQIPAAAAPHPAYGQPLVQLQGAAPQSSPAPIACKMGGPPVEAAKVYGGFQLVPAPDGQFAFLITNPAFPHNGSVIPVYTNSNVGTALPPSVSPSVMPSVTADSVWRPW</sequence>
<gene>
    <name evidence="9" type="primary">hes1</name>
    <name type="ORF">TNeu075p11.1</name>
</gene>
<name>HES1_XENTR</name>
<keyword id="KW-0217">Developmental protein</keyword>
<keyword id="KW-0238">DNA-binding</keyword>
<keyword id="KW-0914">Notch signaling pathway</keyword>
<keyword id="KW-0539">Nucleus</keyword>
<keyword id="KW-1185">Reference proteome</keyword>
<keyword id="KW-0678">Repressor</keyword>
<keyword id="KW-0804">Transcription</keyword>
<keyword id="KW-0805">Transcription regulation</keyword>
<comment type="function">
    <text evidence="1">Transcriptional repressor of a subset of early mesodermal genes including myod1 and t/bra. Binds DNA on N-box motifs: 5'-CACNAG-3'. Acts as a negative regulator of myogenesis, mediating Notch signaling to repress expression of myod1 (By similarity).</text>
</comment>
<comment type="subunit">
    <text evidence="1">Transcription repression requires formation of a complex with a corepressor protein of the Groucho/TLE family. Interacts with the bHLH protein hes2, and binds DNA in the form of a heterodimer with the bHLH protein hey1/hrt1. Interacts with the bHLH protein hes6; this interaction may inhibit the transcriptional repressor activity (By similarity).</text>
</comment>
<comment type="subcellular location">
    <subcellularLocation>
        <location evidence="3 6 7">Nucleus</location>
    </subcellularLocation>
</comment>
<comment type="domain">
    <text evidence="2">Has a particular type of basic domain (presence of a helix-interrupting proline) that binds to the N-box (CACNAG), rather than the canonical E-box (CANNTG).</text>
</comment>
<comment type="domain">
    <text evidence="4">The bHLH, as well as cooperation between the central Orange domain and the C-terminal WRPW motif, is required for transcriptional repressor activity.</text>
</comment>
<comment type="domain">
    <text evidence="1">The C-terminal WRPW motif is a transcriptional repression domain necessary for the interaction with Groucho/TLE family members, transcriptional corepressors recruited to specific target DNA by Hairy-related proteins.</text>
</comment>
<organism>
    <name type="scientific">Xenopus tropicalis</name>
    <name type="common">Western clawed frog</name>
    <name type="synonym">Silurana tropicalis</name>
    <dbReference type="NCBI Taxonomy" id="8364"/>
    <lineage>
        <taxon>Eukaryota</taxon>
        <taxon>Metazoa</taxon>
        <taxon>Chordata</taxon>
        <taxon>Craniata</taxon>
        <taxon>Vertebrata</taxon>
        <taxon>Euteleostomi</taxon>
        <taxon>Amphibia</taxon>
        <taxon>Batrachia</taxon>
        <taxon>Anura</taxon>
        <taxon>Pipoidea</taxon>
        <taxon>Pipidae</taxon>
        <taxon>Xenopodinae</taxon>
        <taxon>Xenopus</taxon>
        <taxon>Silurana</taxon>
    </lineage>
</organism>
<protein>
    <recommendedName>
        <fullName evidence="3">Transcription factor HES-1</fullName>
    </recommendedName>
    <alternativeName>
        <fullName evidence="3">Hairy and enhancer of split 1</fullName>
    </alternativeName>
    <alternativeName>
        <fullName>Protein hairy-1</fullName>
    </alternativeName>
</protein>
<proteinExistence type="evidence at transcript level"/>
<evidence type="ECO:0000250" key="1"/>
<evidence type="ECO:0000250" key="2">
    <source>
        <dbReference type="UniProtKB" id="P14003"/>
    </source>
</evidence>
<evidence type="ECO:0000250" key="3">
    <source>
        <dbReference type="UniProtKB" id="Q14469"/>
    </source>
</evidence>
<evidence type="ECO:0000250" key="4">
    <source>
        <dbReference type="UniProtKB" id="Q6IRB2"/>
    </source>
</evidence>
<evidence type="ECO:0000255" key="5"/>
<evidence type="ECO:0000255" key="6">
    <source>
        <dbReference type="PROSITE-ProRule" id="PRU00380"/>
    </source>
</evidence>
<evidence type="ECO:0000255" key="7">
    <source>
        <dbReference type="PROSITE-ProRule" id="PRU00981"/>
    </source>
</evidence>
<evidence type="ECO:0000256" key="8">
    <source>
        <dbReference type="SAM" id="MobiDB-lite"/>
    </source>
</evidence>
<evidence type="ECO:0000312" key="9">
    <source>
        <dbReference type="EMBL" id="AAH87608.1"/>
    </source>
</evidence>
<evidence type="ECO:0000312" key="10">
    <source>
        <dbReference type="EMBL" id="AAY96799.1"/>
    </source>
</evidence>
<evidence type="ECO:0000312" key="11">
    <source>
        <dbReference type="EMBL" id="CAJ82991.1"/>
    </source>
</evidence>
<accession>Q5PPM5</accession>
<reference evidence="10" key="1">
    <citation type="submission" date="2005-07" db="EMBL/GenBank/DDBJ databases">
        <title>Sequence of Xenopus tropicalis development genes.</title>
        <authorList>
            <person name="Qin S."/>
            <person name="Dors M."/>
            <person name="Johnson E."/>
            <person name="Bloom S."/>
            <person name="Hood L."/>
            <person name="Rowen L."/>
        </authorList>
    </citation>
    <scope>NUCLEOTIDE SEQUENCE [GENOMIC DNA]</scope>
</reference>
<reference evidence="10" key="2">
    <citation type="submission" date="2006-10" db="EMBL/GenBank/DDBJ databases">
        <authorList>
            <consortium name="Sanger Xenopus tropicalis EST/cDNA project"/>
        </authorList>
    </citation>
    <scope>NUCLEOTIDE SEQUENCE [LARGE SCALE MRNA]</scope>
    <source>
        <tissue evidence="11">Neurula</tissue>
    </source>
</reference>
<reference evidence="10" key="3">
    <citation type="submission" date="2004-12" db="EMBL/GenBank/DDBJ databases">
        <authorList>
            <consortium name="NIH - Xenopus Gene Collection (XGC) project"/>
        </authorList>
    </citation>
    <scope>NUCLEOTIDE SEQUENCE [LARGE SCALE MRNA]</scope>
    <source>
        <tissue evidence="11">Neurula</tissue>
    </source>
</reference>
<feature type="chain" id="PRO_0000370740" description="Transcription factor HES-1">
    <location>
        <begin position="1"/>
        <end position="267"/>
    </location>
</feature>
<feature type="domain" description="bHLH" evidence="7">
    <location>
        <begin position="34"/>
        <end position="91"/>
    </location>
</feature>
<feature type="domain" description="Orange" evidence="6">
    <location>
        <begin position="110"/>
        <end position="143"/>
    </location>
</feature>
<feature type="region of interest" description="Disordered" evidence="8">
    <location>
        <begin position="1"/>
        <end position="45"/>
    </location>
</feature>
<feature type="short sequence motif" description="WRPW motif" evidence="5">
    <location>
        <begin position="264"/>
        <end position="267"/>
    </location>
</feature>
<feature type="compositionally biased region" description="Polar residues" evidence="8">
    <location>
        <begin position="8"/>
        <end position="25"/>
    </location>
</feature>
<feature type="compositionally biased region" description="Basic and acidic residues" evidence="8">
    <location>
        <begin position="26"/>
        <end position="35"/>
    </location>
</feature>